<feature type="chain" id="PRO_0000269532" description="Pyrimidine-nucleoside phosphorylase">
    <location>
        <begin position="1"/>
        <end position="433"/>
    </location>
</feature>
<feature type="binding site" evidence="1">
    <location>
        <begin position="81"/>
        <end position="83"/>
    </location>
    <ligand>
        <name>phosphate</name>
        <dbReference type="ChEBI" id="CHEBI:43474"/>
    </ligand>
</feature>
<feature type="binding site" evidence="1">
    <location>
        <position position="88"/>
    </location>
    <ligand>
        <name>K(+)</name>
        <dbReference type="ChEBI" id="CHEBI:29103"/>
    </ligand>
</feature>
<feature type="binding site" evidence="1">
    <location>
        <position position="90"/>
    </location>
    <ligand>
        <name>K(+)</name>
        <dbReference type="ChEBI" id="CHEBI:29103"/>
    </ligand>
</feature>
<feature type="binding site" evidence="1">
    <location>
        <position position="92"/>
    </location>
    <ligand>
        <name>phosphate</name>
        <dbReference type="ChEBI" id="CHEBI:43474"/>
    </ligand>
</feature>
<feature type="binding site" evidence="1">
    <location>
        <begin position="108"/>
        <end position="110"/>
    </location>
    <ligand>
        <name>phosphate</name>
        <dbReference type="ChEBI" id="CHEBI:43474"/>
    </ligand>
</feature>
<feature type="binding site" evidence="1">
    <location>
        <position position="120"/>
    </location>
    <ligand>
        <name>phosphate</name>
        <dbReference type="ChEBI" id="CHEBI:43474"/>
    </ligand>
</feature>
<feature type="binding site" evidence="1">
    <location>
        <position position="168"/>
    </location>
    <ligand>
        <name>substrate</name>
    </ligand>
</feature>
<feature type="binding site" evidence="1">
    <location>
        <position position="187"/>
    </location>
    <ligand>
        <name>substrate</name>
    </ligand>
</feature>
<feature type="binding site" evidence="1">
    <location>
        <position position="243"/>
    </location>
    <ligand>
        <name>K(+)</name>
        <dbReference type="ChEBI" id="CHEBI:29103"/>
    </ligand>
</feature>
<feature type="binding site" evidence="1">
    <location>
        <position position="246"/>
    </location>
    <ligand>
        <name>K(+)</name>
        <dbReference type="ChEBI" id="CHEBI:29103"/>
    </ligand>
</feature>
<feature type="binding site" evidence="1">
    <location>
        <position position="255"/>
    </location>
    <ligand>
        <name>K(+)</name>
        <dbReference type="ChEBI" id="CHEBI:29103"/>
    </ligand>
</feature>
<protein>
    <recommendedName>
        <fullName>Pyrimidine-nucleoside phosphorylase</fullName>
        <shortName>PYNP</shortName>
        <shortName>Py-NPase</shortName>
        <ecNumber>2.4.2.2</ecNumber>
    </recommendedName>
</protein>
<keyword id="KW-0328">Glycosyltransferase</keyword>
<keyword id="KW-0479">Metal-binding</keyword>
<keyword id="KW-0630">Potassium</keyword>
<keyword id="KW-0808">Transferase</keyword>
<evidence type="ECO:0000250" key="1">
    <source>
        <dbReference type="UniProtKB" id="P77836"/>
    </source>
</evidence>
<evidence type="ECO:0000305" key="2"/>
<name>PDP_STAAB</name>
<comment type="function">
    <text evidence="1">Catalyzes phosphorolysis of the pyrimidine nucleosides uridine, thymidine and 2'-deoxyuridine with the formation of the corresponding pyrimidine base and ribose-1-phosphate.</text>
</comment>
<comment type="catalytic activity">
    <reaction evidence="1">
        <text>uridine + phosphate = alpha-D-ribose 1-phosphate + uracil</text>
        <dbReference type="Rhea" id="RHEA:24388"/>
        <dbReference type="ChEBI" id="CHEBI:16704"/>
        <dbReference type="ChEBI" id="CHEBI:17568"/>
        <dbReference type="ChEBI" id="CHEBI:43474"/>
        <dbReference type="ChEBI" id="CHEBI:57720"/>
        <dbReference type="EC" id="2.4.2.2"/>
    </reaction>
</comment>
<comment type="catalytic activity">
    <reaction evidence="1">
        <text>thymidine + phosphate = 2-deoxy-alpha-D-ribose 1-phosphate + thymine</text>
        <dbReference type="Rhea" id="RHEA:16037"/>
        <dbReference type="ChEBI" id="CHEBI:17748"/>
        <dbReference type="ChEBI" id="CHEBI:17821"/>
        <dbReference type="ChEBI" id="CHEBI:43474"/>
        <dbReference type="ChEBI" id="CHEBI:57259"/>
        <dbReference type="EC" id="2.4.2.2"/>
    </reaction>
</comment>
<comment type="catalytic activity">
    <reaction evidence="1">
        <text>2'-deoxyuridine + phosphate = 2-deoxy-alpha-D-ribose 1-phosphate + uracil</text>
        <dbReference type="Rhea" id="RHEA:22824"/>
        <dbReference type="ChEBI" id="CHEBI:16450"/>
        <dbReference type="ChEBI" id="CHEBI:17568"/>
        <dbReference type="ChEBI" id="CHEBI:43474"/>
        <dbReference type="ChEBI" id="CHEBI:57259"/>
        <dbReference type="EC" id="2.4.2.2"/>
    </reaction>
</comment>
<comment type="cofactor">
    <cofactor evidence="1">
        <name>K(+)</name>
        <dbReference type="ChEBI" id="CHEBI:29103"/>
    </cofactor>
    <text evidence="1">Binds 1 K(+) ion per subunit.</text>
</comment>
<comment type="subunit">
    <text evidence="1">Homodimer.</text>
</comment>
<comment type="similarity">
    <text evidence="2">Belongs to the thymidine/pyrimidine-nucleoside phosphorylase family.</text>
</comment>
<organism>
    <name type="scientific">Staphylococcus aureus (strain bovine RF122 / ET3-1)</name>
    <dbReference type="NCBI Taxonomy" id="273036"/>
    <lineage>
        <taxon>Bacteria</taxon>
        <taxon>Bacillati</taxon>
        <taxon>Bacillota</taxon>
        <taxon>Bacilli</taxon>
        <taxon>Bacillales</taxon>
        <taxon>Staphylococcaceae</taxon>
        <taxon>Staphylococcus</taxon>
    </lineage>
</organism>
<dbReference type="EC" id="2.4.2.2"/>
<dbReference type="EMBL" id="AJ938182">
    <property type="protein sequence ID" value="CAI81709.1"/>
    <property type="molecule type" value="Genomic_DNA"/>
</dbReference>
<dbReference type="RefSeq" id="WP_001242300.1">
    <property type="nucleotide sequence ID" value="NC_007622.1"/>
</dbReference>
<dbReference type="SMR" id="Q2YUL7"/>
<dbReference type="KEGG" id="sab:SAB2020c"/>
<dbReference type="HOGENOM" id="CLU_025040_0_1_9"/>
<dbReference type="GO" id="GO:0005829">
    <property type="term" value="C:cytosol"/>
    <property type="evidence" value="ECO:0007669"/>
    <property type="project" value="TreeGrafter"/>
</dbReference>
<dbReference type="GO" id="GO:0004645">
    <property type="term" value="F:1,4-alpha-oligoglucan phosphorylase activity"/>
    <property type="evidence" value="ECO:0007669"/>
    <property type="project" value="InterPro"/>
</dbReference>
<dbReference type="GO" id="GO:0047847">
    <property type="term" value="F:deoxyuridine phosphorylase activity"/>
    <property type="evidence" value="ECO:0007669"/>
    <property type="project" value="RHEA"/>
</dbReference>
<dbReference type="GO" id="GO:0046872">
    <property type="term" value="F:metal ion binding"/>
    <property type="evidence" value="ECO:0007669"/>
    <property type="project" value="UniProtKB-KW"/>
</dbReference>
<dbReference type="GO" id="GO:0009032">
    <property type="term" value="F:thymidine phosphorylase activity"/>
    <property type="evidence" value="ECO:0007669"/>
    <property type="project" value="RHEA"/>
</dbReference>
<dbReference type="GO" id="GO:0004850">
    <property type="term" value="F:uridine phosphorylase activity"/>
    <property type="evidence" value="ECO:0007669"/>
    <property type="project" value="RHEA"/>
</dbReference>
<dbReference type="GO" id="GO:0006206">
    <property type="term" value="P:pyrimidine nucleobase metabolic process"/>
    <property type="evidence" value="ECO:0007669"/>
    <property type="project" value="InterPro"/>
</dbReference>
<dbReference type="GO" id="GO:0006213">
    <property type="term" value="P:pyrimidine nucleoside metabolic process"/>
    <property type="evidence" value="ECO:0007669"/>
    <property type="project" value="InterPro"/>
</dbReference>
<dbReference type="FunFam" id="1.20.970.10:FF:000002">
    <property type="entry name" value="Pyrimidine-nucleoside phosphorylase"/>
    <property type="match status" value="1"/>
</dbReference>
<dbReference type="FunFam" id="3.40.1030.10:FF:000003">
    <property type="entry name" value="Pyrimidine-nucleoside phosphorylase"/>
    <property type="match status" value="1"/>
</dbReference>
<dbReference type="Gene3D" id="3.40.1030.10">
    <property type="entry name" value="Nucleoside phosphorylase/phosphoribosyltransferase catalytic domain"/>
    <property type="match status" value="1"/>
</dbReference>
<dbReference type="Gene3D" id="3.90.1170.30">
    <property type="entry name" value="Pyrimidine nucleoside phosphorylase-like, C-terminal domain"/>
    <property type="match status" value="1"/>
</dbReference>
<dbReference type="Gene3D" id="1.20.970.10">
    <property type="entry name" value="Transferase, Pyrimidine Nucleoside Phosphorylase, Chain C"/>
    <property type="match status" value="1"/>
</dbReference>
<dbReference type="InterPro" id="IPR000312">
    <property type="entry name" value="Glycosyl_Trfase_fam3"/>
</dbReference>
<dbReference type="InterPro" id="IPR017459">
    <property type="entry name" value="Glycosyl_Trfase_fam3_N_dom"/>
</dbReference>
<dbReference type="InterPro" id="IPR036320">
    <property type="entry name" value="Glycosyl_Trfase_fam3_N_dom_sf"/>
</dbReference>
<dbReference type="InterPro" id="IPR035902">
    <property type="entry name" value="Nuc_phospho_transferase"/>
</dbReference>
<dbReference type="InterPro" id="IPR036566">
    <property type="entry name" value="PYNP-like_C_sf"/>
</dbReference>
<dbReference type="InterPro" id="IPR013102">
    <property type="entry name" value="PYNP_C"/>
</dbReference>
<dbReference type="InterPro" id="IPR018090">
    <property type="entry name" value="Pyrmidine_PPas_bac/euk"/>
</dbReference>
<dbReference type="InterPro" id="IPR017872">
    <property type="entry name" value="Pyrmidine_PPase_CS"/>
</dbReference>
<dbReference type="InterPro" id="IPR000053">
    <property type="entry name" value="Thymidine/pyrmidine_PPase"/>
</dbReference>
<dbReference type="NCBIfam" id="NF004490">
    <property type="entry name" value="PRK05820.1"/>
    <property type="match status" value="1"/>
</dbReference>
<dbReference type="NCBIfam" id="NF004747">
    <property type="entry name" value="PRK06078.1"/>
    <property type="match status" value="1"/>
</dbReference>
<dbReference type="NCBIfam" id="TIGR02644">
    <property type="entry name" value="Y_phosphoryl"/>
    <property type="match status" value="1"/>
</dbReference>
<dbReference type="PANTHER" id="PTHR10515">
    <property type="entry name" value="THYMIDINE PHOSPHORYLASE"/>
    <property type="match status" value="1"/>
</dbReference>
<dbReference type="PANTHER" id="PTHR10515:SF0">
    <property type="entry name" value="THYMIDINE PHOSPHORYLASE"/>
    <property type="match status" value="1"/>
</dbReference>
<dbReference type="Pfam" id="PF02885">
    <property type="entry name" value="Glycos_trans_3N"/>
    <property type="match status" value="1"/>
</dbReference>
<dbReference type="Pfam" id="PF00591">
    <property type="entry name" value="Glycos_transf_3"/>
    <property type="match status" value="1"/>
</dbReference>
<dbReference type="Pfam" id="PF07831">
    <property type="entry name" value="PYNP_C"/>
    <property type="match status" value="1"/>
</dbReference>
<dbReference type="PIRSF" id="PIRSF000478">
    <property type="entry name" value="TP_PyNP"/>
    <property type="match status" value="1"/>
</dbReference>
<dbReference type="SMART" id="SM00941">
    <property type="entry name" value="PYNP_C"/>
    <property type="match status" value="1"/>
</dbReference>
<dbReference type="SUPFAM" id="SSF52418">
    <property type="entry name" value="Nucleoside phosphorylase/phosphoribosyltransferase catalytic domain"/>
    <property type="match status" value="1"/>
</dbReference>
<dbReference type="SUPFAM" id="SSF47648">
    <property type="entry name" value="Nucleoside phosphorylase/phosphoribosyltransferase N-terminal domain"/>
    <property type="match status" value="1"/>
</dbReference>
<dbReference type="SUPFAM" id="SSF54680">
    <property type="entry name" value="Pyrimidine nucleoside phosphorylase C-terminal domain"/>
    <property type="match status" value="1"/>
</dbReference>
<dbReference type="PROSITE" id="PS00647">
    <property type="entry name" value="THYMID_PHOSPHORYLASE"/>
    <property type="match status" value="1"/>
</dbReference>
<proteinExistence type="inferred from homology"/>
<accession>Q2YUL7</accession>
<sequence length="433" mass="46367">MRMIDIIEKKRDGHTLTTEEINFFIDGYVKGDIPDYQASSLAMAIYFQDMNDDERAALTMAMVNSGDMIDLSDIKGVKVDKHSTGGVGDTTTLVLAPLVAAVDVPVAKMSGRGLGHTGGTIDKLEAIDGFHVEIDEATFVKLVNENKVAVVGQSGNLTPADKKIYALRDVTGTVNSIPLIASSIMSKKIAAGADAIVLDVKTGSGAFMKTLEDAEALAHAMVRIGNNVGRNTMAIISDMNQPLGRAIGNALELQEAIDTLKGQGPKDLTELVLTLGSQMVVLANKAETLEEARALLIEAIDSGAALEKFKTFIKNQGGDETVIDHPERLPQAQYQIEYKAKKSGYVTELVSNDIGVASMMLGAGRLTKEDDIDLAVGIVLNKKIGDKVEEGESLLTIHSNRQDVDDVVKKLDSSITIADHVVSPTLIHKIITE</sequence>
<gene>
    <name type="primary">pdp</name>
    <name type="synonym">pyn</name>
    <name type="ordered locus">SAB2020c</name>
</gene>
<reference key="1">
    <citation type="journal article" date="2007" name="PLoS ONE">
        <title>Molecular correlates of host specialization in Staphylococcus aureus.</title>
        <authorList>
            <person name="Herron-Olson L."/>
            <person name="Fitzgerald J.R."/>
            <person name="Musser J.M."/>
            <person name="Kapur V."/>
        </authorList>
    </citation>
    <scope>NUCLEOTIDE SEQUENCE [LARGE SCALE GENOMIC DNA]</scope>
    <source>
        <strain>bovine RF122 / ET3-1</strain>
    </source>
</reference>